<reference key="1">
    <citation type="journal article" date="2004" name="Genome Res.">
        <title>The status, quality, and expansion of the NIH full-length cDNA project: the Mammalian Gene Collection (MGC).</title>
        <authorList>
            <consortium name="The MGC Project Team"/>
        </authorList>
    </citation>
    <scope>NUCLEOTIDE SEQUENCE [LARGE SCALE MRNA]</scope>
    <source>
        <tissue>Testis</tissue>
    </source>
</reference>
<keyword id="KW-0067">ATP-binding</keyword>
<keyword id="KW-0963">Cytoplasm</keyword>
<keyword id="KW-0217">Developmental protein</keyword>
<keyword id="KW-0221">Differentiation</keyword>
<keyword id="KW-0276">Fatty acid metabolism</keyword>
<keyword id="KW-0436">Ligase</keyword>
<keyword id="KW-0443">Lipid metabolism</keyword>
<keyword id="KW-0472">Membrane</keyword>
<keyword id="KW-0547">Nucleotide-binding</keyword>
<keyword id="KW-1185">Reference proteome</keyword>
<keyword id="KW-0744">Spermatogenesis</keyword>
<dbReference type="EC" id="6.2.1.3" evidence="2"/>
<dbReference type="EC" id="6.2.1.15" evidence="2"/>
<dbReference type="EMBL" id="BC129110">
    <property type="protein sequence ID" value="AAI29111.1"/>
    <property type="molecule type" value="mRNA"/>
</dbReference>
<dbReference type="RefSeq" id="NP_001073565.1">
    <property type="nucleotide sequence ID" value="NM_001080096.1"/>
</dbReference>
<dbReference type="SMR" id="A1L1K7"/>
<dbReference type="FunCoup" id="A1L1K7">
    <property type="interactions" value="100"/>
</dbReference>
<dbReference type="STRING" id="10116.ENSRNOP00000066937"/>
<dbReference type="GlyGen" id="A1L1K7">
    <property type="glycosylation" value="1 site"/>
</dbReference>
<dbReference type="PhosphoSitePlus" id="A1L1K7"/>
<dbReference type="PaxDb" id="10116-ENSRNOP00000066937"/>
<dbReference type="PeptideAtlas" id="A1L1K7"/>
<dbReference type="Ensembl" id="ENSRNOT00000074555.3">
    <property type="protein sequence ID" value="ENSRNOP00000066937.1"/>
    <property type="gene ID" value="ENSRNOG00000045947.4"/>
</dbReference>
<dbReference type="GeneID" id="301120"/>
<dbReference type="KEGG" id="rno:301120"/>
<dbReference type="AGR" id="RGD:1588580"/>
<dbReference type="CTD" id="81616"/>
<dbReference type="RGD" id="1588580">
    <property type="gene designation" value="Acsbg2"/>
</dbReference>
<dbReference type="eggNOG" id="KOG1256">
    <property type="taxonomic scope" value="Eukaryota"/>
</dbReference>
<dbReference type="GeneTree" id="ENSGT00940000155332"/>
<dbReference type="HOGENOM" id="CLU_000022_45_5_1"/>
<dbReference type="InParanoid" id="A1L1K7"/>
<dbReference type="OMA" id="ETCAYVC"/>
<dbReference type="OrthoDB" id="3633556at2759"/>
<dbReference type="PhylomeDB" id="A1L1K7"/>
<dbReference type="Reactome" id="R-RNO-75876">
    <property type="pathway name" value="Synthesis of very long-chain fatty acyl-CoAs"/>
</dbReference>
<dbReference type="PRO" id="PR:A1L1K7"/>
<dbReference type="Proteomes" id="UP000002494">
    <property type="component" value="Chromosome 9"/>
</dbReference>
<dbReference type="Bgee" id="ENSRNOG00000045947">
    <property type="expression patterns" value="Expressed in testis and 1 other cell type or tissue"/>
</dbReference>
<dbReference type="GO" id="GO:0005737">
    <property type="term" value="C:cytoplasm"/>
    <property type="evidence" value="ECO:0000266"/>
    <property type="project" value="RGD"/>
</dbReference>
<dbReference type="GO" id="GO:0005829">
    <property type="term" value="C:cytosol"/>
    <property type="evidence" value="ECO:0000266"/>
    <property type="project" value="RGD"/>
</dbReference>
<dbReference type="GO" id="GO:0016020">
    <property type="term" value="C:membrane"/>
    <property type="evidence" value="ECO:0007669"/>
    <property type="project" value="UniProtKB-SubCell"/>
</dbReference>
<dbReference type="GO" id="GO:0005739">
    <property type="term" value="C:mitochondrion"/>
    <property type="evidence" value="ECO:0000266"/>
    <property type="project" value="RGD"/>
</dbReference>
<dbReference type="GO" id="GO:0047676">
    <property type="term" value="F:arachidonate-CoA ligase activity"/>
    <property type="evidence" value="ECO:0000250"/>
    <property type="project" value="UniProtKB"/>
</dbReference>
<dbReference type="GO" id="GO:0005524">
    <property type="term" value="F:ATP binding"/>
    <property type="evidence" value="ECO:0007669"/>
    <property type="project" value="UniProtKB-KW"/>
</dbReference>
<dbReference type="GO" id="GO:0047617">
    <property type="term" value="F:fatty acyl-CoA hydrolase activity"/>
    <property type="evidence" value="ECO:0000266"/>
    <property type="project" value="RGD"/>
</dbReference>
<dbReference type="GO" id="GO:0004467">
    <property type="term" value="F:long-chain fatty acid-CoA ligase activity"/>
    <property type="evidence" value="ECO:0000250"/>
    <property type="project" value="UniProtKB"/>
</dbReference>
<dbReference type="GO" id="GO:0030154">
    <property type="term" value="P:cell differentiation"/>
    <property type="evidence" value="ECO:0007669"/>
    <property type="project" value="UniProtKB-KW"/>
</dbReference>
<dbReference type="GO" id="GO:0006631">
    <property type="term" value="P:fatty acid metabolic process"/>
    <property type="evidence" value="ECO:0000266"/>
    <property type="project" value="RGD"/>
</dbReference>
<dbReference type="GO" id="GO:0042759">
    <property type="term" value="P:long-chain fatty acid biosynthetic process"/>
    <property type="evidence" value="ECO:0000318"/>
    <property type="project" value="GO_Central"/>
</dbReference>
<dbReference type="GO" id="GO:0007283">
    <property type="term" value="P:spermatogenesis"/>
    <property type="evidence" value="ECO:0007669"/>
    <property type="project" value="UniProtKB-KW"/>
</dbReference>
<dbReference type="CDD" id="cd05933">
    <property type="entry name" value="ACSBG_like"/>
    <property type="match status" value="1"/>
</dbReference>
<dbReference type="Gene3D" id="3.40.50.12780">
    <property type="entry name" value="N-terminal domain of ligase-like"/>
    <property type="match status" value="2"/>
</dbReference>
<dbReference type="InterPro" id="IPR020845">
    <property type="entry name" value="AMP-binding_CS"/>
</dbReference>
<dbReference type="InterPro" id="IPR000873">
    <property type="entry name" value="AMP-dep_synth/lig_dom"/>
</dbReference>
<dbReference type="InterPro" id="IPR042099">
    <property type="entry name" value="ANL_N_sf"/>
</dbReference>
<dbReference type="PANTHER" id="PTHR43272:SF101">
    <property type="entry name" value="ACYL-COA SYNTHETASE BUBBLEGUM FAMILY MEMBER 2-RELATED"/>
    <property type="match status" value="1"/>
</dbReference>
<dbReference type="PANTHER" id="PTHR43272">
    <property type="entry name" value="LONG-CHAIN-FATTY-ACID--COA LIGASE"/>
    <property type="match status" value="1"/>
</dbReference>
<dbReference type="Pfam" id="PF00501">
    <property type="entry name" value="AMP-binding"/>
    <property type="match status" value="1"/>
</dbReference>
<dbReference type="Pfam" id="PF23562">
    <property type="entry name" value="AMP-binding_C_3"/>
    <property type="match status" value="1"/>
</dbReference>
<dbReference type="SUPFAM" id="SSF56801">
    <property type="entry name" value="Acetyl-CoA synthetase-like"/>
    <property type="match status" value="1"/>
</dbReference>
<dbReference type="PROSITE" id="PS00455">
    <property type="entry name" value="AMP_BINDING"/>
    <property type="match status" value="1"/>
</dbReference>
<evidence type="ECO:0000250" key="1"/>
<evidence type="ECO:0000250" key="2">
    <source>
        <dbReference type="UniProtKB" id="Q5FVE4"/>
    </source>
</evidence>
<evidence type="ECO:0000256" key="3">
    <source>
        <dbReference type="SAM" id="MobiDB-lite"/>
    </source>
</evidence>
<evidence type="ECO:0000305" key="4"/>
<evidence type="ECO:0000312" key="5">
    <source>
        <dbReference type="RGD" id="1588580"/>
    </source>
</evidence>
<gene>
    <name evidence="5" type="primary">Acsbg2</name>
</gene>
<accession>A1L1K7</accession>
<proteinExistence type="evidence at transcript level"/>
<name>ACBG2_RAT</name>
<protein>
    <recommendedName>
        <fullName evidence="4">Long-chain-fatty-acid--CoA ligase ACSBG2</fullName>
        <ecNumber evidence="2">6.2.1.3</ecNumber>
    </recommendedName>
    <alternativeName>
        <fullName>Acyl-CoA synthetase bubblegum family member 2</fullName>
    </alternativeName>
    <alternativeName>
        <fullName evidence="2">Arachidonate--CoA ligase ACSBG2</fullName>
        <ecNumber evidence="2">6.2.1.15</ecNumber>
    </alternativeName>
</protein>
<organism>
    <name type="scientific">Rattus norvegicus</name>
    <name type="common">Rat</name>
    <dbReference type="NCBI Taxonomy" id="10116"/>
    <lineage>
        <taxon>Eukaryota</taxon>
        <taxon>Metazoa</taxon>
        <taxon>Chordata</taxon>
        <taxon>Craniata</taxon>
        <taxon>Vertebrata</taxon>
        <taxon>Euteleostomi</taxon>
        <taxon>Mammalia</taxon>
        <taxon>Eutheria</taxon>
        <taxon>Euarchontoglires</taxon>
        <taxon>Glires</taxon>
        <taxon>Rodentia</taxon>
        <taxon>Myomorpha</taxon>
        <taxon>Muroidea</taxon>
        <taxon>Muridae</taxon>
        <taxon>Murinae</taxon>
        <taxon>Rattus</taxon>
    </lineage>
</organism>
<sequence>MTQEKKAEDPDRGMDTTSAAPRLWSTHCDGEVLLRLSKHGPGHETPMTIPELFQESVERFGAYPALASKNGKKWDTLTFSQYYDVCRKAARSLIKLGLQRFHGVGILGFNSVEWVVAALGAILAGGLCVGIYATNSAEACQYVIKQANVNVLIVENDQQLQKILSIPPDKMETVKAIVQYRLPLMENSTNLYSWQDFMELGNAIPNIQLDRVILSQKANQCAVIIYTSGTTGSPKGVMLSHDNITWTAGAMAREIELIHVSGKQDTIVSYLPLSHIAAQLMDIWIPIKVGVLTFFAQPDALRGTLVYTLQEVKPTYFLGVPRVWEKMQDTIKENVAKSSNLRKKAFAWAKMLGLKVNTKKMLGKRDIPMNYRMAKALVFTKVRTSLGLDNCHTFFSGASPLSQDVSEFFLSLDIPIGEIYGMTECSGPHTVSCKSIYRVLSCGKVLNGCKNMLYKQNKDGVGEVCMWGRHVFMGYLGKEDATLEVLDEDGWLHSGDIGRLDSHDFLYITGRIKEVLITAGGENIWPIPIETLVKEKIPIISHAMLVGDKAKFLSMLLTLKCETDQMSGEPLDKLNLEAISFCQMLGSQAVTVSDILKIRDPVVYTAIQYGIDIVNQQAVSDSHRIRKWIILEKDFSIQGGELGPTSKLKRDLITQKYKAQIDNMYSS</sequence>
<comment type="function">
    <text evidence="2">Catalyzes the conversion of fatty acids such as long chain and very long-chain fatty acids to their active form acyl-CoAs for both synthesis of cellular lipids, and degradation via beta-oxidation. Can activate diverse saturated, monosaturated and polyunsaturated fatty acids. Has increased ability to activate oleic and linoleic acid. May play a role in spermatogenesis.</text>
</comment>
<comment type="catalytic activity">
    <reaction evidence="2">
        <text>a long-chain fatty acid + ATP + CoA = a long-chain fatty acyl-CoA + AMP + diphosphate</text>
        <dbReference type="Rhea" id="RHEA:15421"/>
        <dbReference type="ChEBI" id="CHEBI:30616"/>
        <dbReference type="ChEBI" id="CHEBI:33019"/>
        <dbReference type="ChEBI" id="CHEBI:57287"/>
        <dbReference type="ChEBI" id="CHEBI:57560"/>
        <dbReference type="ChEBI" id="CHEBI:83139"/>
        <dbReference type="ChEBI" id="CHEBI:456215"/>
        <dbReference type="EC" id="6.2.1.3"/>
    </reaction>
    <physiologicalReaction direction="left-to-right" evidence="2">
        <dbReference type="Rhea" id="RHEA:15422"/>
    </physiologicalReaction>
</comment>
<comment type="catalytic activity">
    <reaction evidence="2">
        <text>(5Z,8Z,11Z,14Z)-eicosatetraenoate + ATP + CoA = (5Z,8Z,11Z,14Z)-eicosatetraenoyl-CoA + AMP + diphosphate</text>
        <dbReference type="Rhea" id="RHEA:19713"/>
        <dbReference type="ChEBI" id="CHEBI:30616"/>
        <dbReference type="ChEBI" id="CHEBI:32395"/>
        <dbReference type="ChEBI" id="CHEBI:33019"/>
        <dbReference type="ChEBI" id="CHEBI:57287"/>
        <dbReference type="ChEBI" id="CHEBI:57368"/>
        <dbReference type="ChEBI" id="CHEBI:456215"/>
        <dbReference type="EC" id="6.2.1.15"/>
    </reaction>
    <physiologicalReaction direction="left-to-right" evidence="2">
        <dbReference type="Rhea" id="RHEA:19714"/>
    </physiologicalReaction>
</comment>
<comment type="catalytic activity">
    <reaction evidence="2">
        <text>hexadecanoate + ATP + CoA = hexadecanoyl-CoA + AMP + diphosphate</text>
        <dbReference type="Rhea" id="RHEA:30751"/>
        <dbReference type="ChEBI" id="CHEBI:7896"/>
        <dbReference type="ChEBI" id="CHEBI:30616"/>
        <dbReference type="ChEBI" id="CHEBI:33019"/>
        <dbReference type="ChEBI" id="CHEBI:57287"/>
        <dbReference type="ChEBI" id="CHEBI:57379"/>
        <dbReference type="ChEBI" id="CHEBI:456215"/>
    </reaction>
    <physiologicalReaction direction="left-to-right" evidence="2">
        <dbReference type="Rhea" id="RHEA:30752"/>
    </physiologicalReaction>
</comment>
<comment type="catalytic activity">
    <reaction evidence="2">
        <text>(9Z)-octadecenoate + ATP + CoA = (9Z)-octadecenoyl-CoA + AMP + diphosphate</text>
        <dbReference type="Rhea" id="RHEA:33607"/>
        <dbReference type="ChEBI" id="CHEBI:30616"/>
        <dbReference type="ChEBI" id="CHEBI:30823"/>
        <dbReference type="ChEBI" id="CHEBI:33019"/>
        <dbReference type="ChEBI" id="CHEBI:57287"/>
        <dbReference type="ChEBI" id="CHEBI:57387"/>
        <dbReference type="ChEBI" id="CHEBI:456215"/>
    </reaction>
    <physiologicalReaction direction="left-to-right" evidence="2">
        <dbReference type="Rhea" id="RHEA:33608"/>
    </physiologicalReaction>
</comment>
<comment type="catalytic activity">
    <reaction evidence="2">
        <text>(9Z,12Z)-octadecadienoate + ATP + CoA = (9Z,12Z)-octadecadienoyl-CoA + AMP + diphosphate</text>
        <dbReference type="Rhea" id="RHEA:33651"/>
        <dbReference type="ChEBI" id="CHEBI:30245"/>
        <dbReference type="ChEBI" id="CHEBI:30616"/>
        <dbReference type="ChEBI" id="CHEBI:33019"/>
        <dbReference type="ChEBI" id="CHEBI:57287"/>
        <dbReference type="ChEBI" id="CHEBI:57383"/>
        <dbReference type="ChEBI" id="CHEBI:456215"/>
    </reaction>
    <physiologicalReaction direction="left-to-right" evidence="2">
        <dbReference type="Rhea" id="RHEA:33652"/>
    </physiologicalReaction>
</comment>
<comment type="catalytic activity">
    <reaction evidence="2">
        <text>tetracosanoate + ATP + CoA = tetracosanoyl-CoA + AMP + diphosphate</text>
        <dbReference type="Rhea" id="RHEA:33639"/>
        <dbReference type="ChEBI" id="CHEBI:30616"/>
        <dbReference type="ChEBI" id="CHEBI:31014"/>
        <dbReference type="ChEBI" id="CHEBI:33019"/>
        <dbReference type="ChEBI" id="CHEBI:57287"/>
        <dbReference type="ChEBI" id="CHEBI:65052"/>
        <dbReference type="ChEBI" id="CHEBI:456215"/>
    </reaction>
    <physiologicalReaction direction="left-to-right" evidence="2">
        <dbReference type="Rhea" id="RHEA:33640"/>
    </physiologicalReaction>
</comment>
<comment type="subcellular location">
    <subcellularLocation>
        <location evidence="1">Cytoplasm</location>
    </subcellularLocation>
    <subcellularLocation>
        <location evidence="1">Membrane</location>
        <topology evidence="1">Peripheral membrane protein</topology>
    </subcellularLocation>
</comment>
<comment type="similarity">
    <text evidence="4">Belongs to the ATP-dependent AMP-binding enzyme family. Bubblegum subfamily.</text>
</comment>
<feature type="chain" id="PRO_0000315814" description="Long-chain-fatty-acid--CoA ligase ACSBG2">
    <location>
        <begin position="1"/>
        <end position="667"/>
    </location>
</feature>
<feature type="region of interest" description="Disordered" evidence="3">
    <location>
        <begin position="1"/>
        <end position="20"/>
    </location>
</feature>
<feature type="compositionally biased region" description="Basic and acidic residues" evidence="3">
    <location>
        <begin position="1"/>
        <end position="14"/>
    </location>
</feature>
<feature type="binding site" evidence="1">
    <location>
        <begin position="227"/>
        <end position="235"/>
    </location>
    <ligand>
        <name>ATP</name>
        <dbReference type="ChEBI" id="CHEBI:30616"/>
    </ligand>
</feature>
<feature type="binding site" evidence="1">
    <location>
        <begin position="418"/>
        <end position="423"/>
    </location>
    <ligand>
        <name>ATP</name>
        <dbReference type="ChEBI" id="CHEBI:30616"/>
    </ligand>
</feature>
<feature type="binding site" evidence="1">
    <location>
        <position position="496"/>
    </location>
    <ligand>
        <name>ATP</name>
        <dbReference type="ChEBI" id="CHEBI:30616"/>
    </ligand>
</feature>
<feature type="binding site" evidence="1">
    <location>
        <position position="511"/>
    </location>
    <ligand>
        <name>ATP</name>
        <dbReference type="ChEBI" id="CHEBI:30616"/>
    </ligand>
</feature>
<feature type="binding site" evidence="1">
    <location>
        <position position="624"/>
    </location>
    <ligand>
        <name>ATP</name>
        <dbReference type="ChEBI" id="CHEBI:30616"/>
    </ligand>
</feature>